<name>NSRR_HALH5</name>
<protein>
    <recommendedName>
        <fullName>HTH-type transcriptional regulator NsrR</fullName>
    </recommendedName>
</protein>
<organism>
    <name type="scientific">Halalkalibacterium halodurans (strain ATCC BAA-125 / DSM 18197 / FERM 7344 / JCM 9153 / C-125)</name>
    <name type="common">Bacillus halodurans</name>
    <dbReference type="NCBI Taxonomy" id="272558"/>
    <lineage>
        <taxon>Bacteria</taxon>
        <taxon>Bacillati</taxon>
        <taxon>Bacillota</taxon>
        <taxon>Bacilli</taxon>
        <taxon>Bacillales</taxon>
        <taxon>Bacillaceae</taxon>
        <taxon>Halalkalibacterium (ex Joshi et al. 2022)</taxon>
    </lineage>
</organism>
<sequence>MQLTSYTDYSLRLLLYLALQPKDKLSSVKQVATIYNISYNHLTKVTYELGKLGLIETIKGRNGGIRLAKAPEEINIGAVVKQTEDNLELVECFNHETNTCILNPVCRLKGVLHEALTAYLRVLEQYTLKDLLTNEDELQALLKLKP</sequence>
<gene>
    <name type="primary">nsrR</name>
    <name type="ordered locus">BH1057</name>
</gene>
<comment type="function">
    <text evidence="1">Nitric oxide-responsive transcriptional regulator.</text>
</comment>
<comment type="cofactor">
    <cofactor evidence="3">
        <name>[2Fe-2S] cluster</name>
        <dbReference type="ChEBI" id="CHEBI:190135"/>
    </cofactor>
    <text evidence="3">Binds 1 [2Fe-2S] cluster per subunit.</text>
</comment>
<evidence type="ECO:0000250" key="1"/>
<evidence type="ECO:0000255" key="2">
    <source>
        <dbReference type="PROSITE-ProRule" id="PRU00540"/>
    </source>
</evidence>
<evidence type="ECO:0000305" key="3"/>
<feature type="chain" id="PRO_0000109566" description="HTH-type transcriptional regulator NsrR">
    <location>
        <begin position="1"/>
        <end position="146"/>
    </location>
</feature>
<feature type="domain" description="HTH rrf2-type" evidence="2">
    <location>
        <begin position="2"/>
        <end position="133"/>
    </location>
</feature>
<feature type="DNA-binding region" description="H-T-H motif" evidence="2">
    <location>
        <begin position="28"/>
        <end position="51"/>
    </location>
</feature>
<feature type="binding site" evidence="2">
    <location>
        <position position="92"/>
    </location>
    <ligand>
        <name>[2Fe-2S] cluster</name>
        <dbReference type="ChEBI" id="CHEBI:190135"/>
    </ligand>
</feature>
<feature type="binding site" evidence="2">
    <location>
        <position position="100"/>
    </location>
    <ligand>
        <name>[2Fe-2S] cluster</name>
        <dbReference type="ChEBI" id="CHEBI:190135"/>
    </ligand>
</feature>
<feature type="binding site" evidence="2">
    <location>
        <position position="106"/>
    </location>
    <ligand>
        <name>[2Fe-2S] cluster</name>
        <dbReference type="ChEBI" id="CHEBI:190135"/>
    </ligand>
</feature>
<dbReference type="EMBL" id="AB024563">
    <property type="protein sequence ID" value="BAA83958.1"/>
    <property type="molecule type" value="Genomic_DNA"/>
</dbReference>
<dbReference type="EMBL" id="BA000004">
    <property type="protein sequence ID" value="BAB04776.1"/>
    <property type="molecule type" value="Genomic_DNA"/>
</dbReference>
<dbReference type="PIR" id="A83782">
    <property type="entry name" value="A83782"/>
</dbReference>
<dbReference type="RefSeq" id="WP_010897227.1">
    <property type="nucleotide sequence ID" value="NC_002570.2"/>
</dbReference>
<dbReference type="SMR" id="Q9RC41"/>
<dbReference type="STRING" id="272558.gene:10726951"/>
<dbReference type="GeneID" id="87596686"/>
<dbReference type="KEGG" id="bha:BH1057"/>
<dbReference type="eggNOG" id="COG1959">
    <property type="taxonomic scope" value="Bacteria"/>
</dbReference>
<dbReference type="HOGENOM" id="CLU_107144_2_1_9"/>
<dbReference type="OrthoDB" id="9795923at2"/>
<dbReference type="Proteomes" id="UP000001258">
    <property type="component" value="Chromosome"/>
</dbReference>
<dbReference type="GO" id="GO:0005829">
    <property type="term" value="C:cytosol"/>
    <property type="evidence" value="ECO:0007669"/>
    <property type="project" value="TreeGrafter"/>
</dbReference>
<dbReference type="GO" id="GO:0051537">
    <property type="term" value="F:2 iron, 2 sulfur cluster binding"/>
    <property type="evidence" value="ECO:0007669"/>
    <property type="project" value="UniProtKB-KW"/>
</dbReference>
<dbReference type="GO" id="GO:0003677">
    <property type="term" value="F:DNA binding"/>
    <property type="evidence" value="ECO:0007669"/>
    <property type="project" value="UniProtKB-KW"/>
</dbReference>
<dbReference type="GO" id="GO:0003700">
    <property type="term" value="F:DNA-binding transcription factor activity"/>
    <property type="evidence" value="ECO:0007669"/>
    <property type="project" value="TreeGrafter"/>
</dbReference>
<dbReference type="GO" id="GO:0046872">
    <property type="term" value="F:metal ion binding"/>
    <property type="evidence" value="ECO:0007669"/>
    <property type="project" value="UniProtKB-KW"/>
</dbReference>
<dbReference type="Gene3D" id="1.10.10.10">
    <property type="entry name" value="Winged helix-like DNA-binding domain superfamily/Winged helix DNA-binding domain"/>
    <property type="match status" value="1"/>
</dbReference>
<dbReference type="InterPro" id="IPR030489">
    <property type="entry name" value="TR_Rrf2-type_CS"/>
</dbReference>
<dbReference type="InterPro" id="IPR000944">
    <property type="entry name" value="Tscrpt_reg_Rrf2"/>
</dbReference>
<dbReference type="InterPro" id="IPR036388">
    <property type="entry name" value="WH-like_DNA-bd_sf"/>
</dbReference>
<dbReference type="InterPro" id="IPR036390">
    <property type="entry name" value="WH_DNA-bd_sf"/>
</dbReference>
<dbReference type="NCBIfam" id="TIGR00738">
    <property type="entry name" value="rrf2_super"/>
    <property type="match status" value="1"/>
</dbReference>
<dbReference type="PANTHER" id="PTHR33221:SF4">
    <property type="entry name" value="HTH-TYPE TRANSCRIPTIONAL REPRESSOR NSRR"/>
    <property type="match status" value="1"/>
</dbReference>
<dbReference type="PANTHER" id="PTHR33221">
    <property type="entry name" value="WINGED HELIX-TURN-HELIX TRANSCRIPTIONAL REGULATOR, RRF2 FAMILY"/>
    <property type="match status" value="1"/>
</dbReference>
<dbReference type="Pfam" id="PF02082">
    <property type="entry name" value="Rrf2"/>
    <property type="match status" value="1"/>
</dbReference>
<dbReference type="SUPFAM" id="SSF46785">
    <property type="entry name" value="Winged helix' DNA-binding domain"/>
    <property type="match status" value="1"/>
</dbReference>
<dbReference type="PROSITE" id="PS01332">
    <property type="entry name" value="HTH_RRF2_1"/>
    <property type="match status" value="1"/>
</dbReference>
<dbReference type="PROSITE" id="PS51197">
    <property type="entry name" value="HTH_RRF2_2"/>
    <property type="match status" value="1"/>
</dbReference>
<reference key="1">
    <citation type="journal article" date="1999" name="Extremophiles">
        <title>Genetic analysis of the chromosome of alkaliphilic Bacillus halodurans C-125.</title>
        <authorList>
            <person name="Takami H."/>
            <person name="Takaki Y."/>
            <person name="Nakasone K."/>
            <person name="Sakiyama T."/>
            <person name="Maeno G."/>
            <person name="Sasaki R."/>
            <person name="Hirama C."/>
            <person name="Fuji F."/>
            <person name="Masui N."/>
        </authorList>
    </citation>
    <scope>NUCLEOTIDE SEQUENCE [GENOMIC DNA]</scope>
    <source>
        <strain>ATCC BAA-125 / DSM 18197 / FERM 7344 / JCM 9153 / C-125</strain>
    </source>
</reference>
<reference key="2">
    <citation type="journal article" date="2000" name="Nucleic Acids Res.">
        <title>Complete genome sequence of the alkaliphilic bacterium Bacillus halodurans and genomic sequence comparison with Bacillus subtilis.</title>
        <authorList>
            <person name="Takami H."/>
            <person name="Nakasone K."/>
            <person name="Takaki Y."/>
            <person name="Maeno G."/>
            <person name="Sasaki R."/>
            <person name="Masui N."/>
            <person name="Fuji F."/>
            <person name="Hirama C."/>
            <person name="Nakamura Y."/>
            <person name="Ogasawara N."/>
            <person name="Kuhara S."/>
            <person name="Horikoshi K."/>
        </authorList>
    </citation>
    <scope>NUCLEOTIDE SEQUENCE [LARGE SCALE GENOMIC DNA]</scope>
    <source>
        <strain>ATCC BAA-125 / DSM 18197 / FERM 7344 / JCM 9153 / C-125</strain>
    </source>
</reference>
<proteinExistence type="inferred from homology"/>
<accession>Q9RC41</accession>
<accession>Q9JPV6</accession>
<keyword id="KW-0001">2Fe-2S</keyword>
<keyword id="KW-0238">DNA-binding</keyword>
<keyword id="KW-0408">Iron</keyword>
<keyword id="KW-0411">Iron-sulfur</keyword>
<keyword id="KW-0479">Metal-binding</keyword>
<keyword id="KW-1185">Reference proteome</keyword>
<keyword id="KW-0804">Transcription</keyword>
<keyword id="KW-0805">Transcription regulation</keyword>